<protein>
    <recommendedName>
        <fullName>Engulfment and cell motility protein 3</fullName>
    </recommendedName>
</protein>
<keyword id="KW-0053">Apoptosis</keyword>
<keyword id="KW-0963">Cytoplasm</keyword>
<keyword id="KW-0581">Phagocytosis</keyword>
<keyword id="KW-1185">Reference proteome</keyword>
<keyword id="KW-0729">SH3-binding</keyword>
<sequence length="652" mass="73958">MAPPRNVVKIAVQMRDAIPQLIQLDQAKPLAAVLKEVCDAWSLPHSERYALQFADGHRRYITENNRMEIKNGSILCLSTAPDREAERLLRGLQSESREGRREALRHLLLLAPDLTFAREVISRDGLQRLGTIIEDGDDLGEVLALALRAFLELMEHGVVSWETLSIPFVRKVVCYVNMNLMDASVQPLALGLLENVTLSSPTLGQLVKSEVPLDRLLVHLQVMNQQLQTKAMALLTALLQGATPAERKHMLDYLWQRNLRQFIYKNIIHSAAPLGDEMAHHLYVLQALMLGLLEPRMRTPLDPYSQEQREQLQALRQAAFEPEGESVGAGLSADRRRSLCAREFRKLGFSNSNPAQDLERVPPGLLALDNMLYFSRQAPSAYSRFVLENSSREDKHECPFARSSIQLTVLLCDLLHVGEPCSETAQDFSPMFFGQDQSFHELFCVSIQLLNKTWKEMRATQEDFDKVMQVVREQLARTLALKPSSLELFRTKVNALTYGEVLRLRQTERLHQEGTLAPPILELREKLKPELMGLIRQQRLLRLCEGTLFHKISSRRRQDKLWFCCLSPNHKVLQYGDVEEGVGPPTPESLPEQLPVADIRALLTGKDCPHVREKGSGKQNKDVCELAFSVSYDHGEEEAYLNFIAPSKREMG</sequence>
<proteinExistence type="evidence at transcript level"/>
<gene>
    <name type="primary">ELMO3</name>
</gene>
<feature type="chain" id="PRO_0000375222" description="Engulfment and cell motility protein 3">
    <location>
        <begin position="1"/>
        <end position="652"/>
    </location>
</feature>
<feature type="domain" description="ELMO" evidence="3">
    <location>
        <begin position="307"/>
        <end position="479"/>
    </location>
</feature>
<organism>
    <name type="scientific">Bos taurus</name>
    <name type="common">Bovine</name>
    <dbReference type="NCBI Taxonomy" id="9913"/>
    <lineage>
        <taxon>Eukaryota</taxon>
        <taxon>Metazoa</taxon>
        <taxon>Chordata</taxon>
        <taxon>Craniata</taxon>
        <taxon>Vertebrata</taxon>
        <taxon>Euteleostomi</taxon>
        <taxon>Mammalia</taxon>
        <taxon>Eutheria</taxon>
        <taxon>Laurasiatheria</taxon>
        <taxon>Artiodactyla</taxon>
        <taxon>Ruminantia</taxon>
        <taxon>Pecora</taxon>
        <taxon>Bovidae</taxon>
        <taxon>Bovinae</taxon>
        <taxon>Bos</taxon>
    </lineage>
</organism>
<dbReference type="EMBL" id="BC150105">
    <property type="protein sequence ID" value="AAI50106.1"/>
    <property type="molecule type" value="mRNA"/>
</dbReference>
<dbReference type="RefSeq" id="NP_001095561.1">
    <property type="nucleotide sequence ID" value="NM_001102091.1"/>
</dbReference>
<dbReference type="SMR" id="A6QR40"/>
<dbReference type="FunCoup" id="A6QR40">
    <property type="interactions" value="396"/>
</dbReference>
<dbReference type="STRING" id="9913.ENSBTAP00000001696"/>
<dbReference type="PaxDb" id="9913-ENSBTAP00000001696"/>
<dbReference type="GeneID" id="525427"/>
<dbReference type="KEGG" id="bta:525427"/>
<dbReference type="CTD" id="79767"/>
<dbReference type="VEuPathDB" id="HostDB:ENSBTAG00000001286"/>
<dbReference type="eggNOG" id="KOG2999">
    <property type="taxonomic scope" value="Eukaryota"/>
</dbReference>
<dbReference type="HOGENOM" id="CLU_023887_0_0_1"/>
<dbReference type="InParanoid" id="A6QR40"/>
<dbReference type="OMA" id="KIAIQMM"/>
<dbReference type="OrthoDB" id="28413at2759"/>
<dbReference type="TreeFam" id="TF312966"/>
<dbReference type="Proteomes" id="UP000009136">
    <property type="component" value="Chromosome 18"/>
</dbReference>
<dbReference type="Bgee" id="ENSBTAG00000001286">
    <property type="expression patterns" value="Expressed in urinary bladder and 99 other cell types or tissues"/>
</dbReference>
<dbReference type="GO" id="GO:0005737">
    <property type="term" value="C:cytoplasm"/>
    <property type="evidence" value="ECO:0007669"/>
    <property type="project" value="UniProtKB-SubCell"/>
</dbReference>
<dbReference type="GO" id="GO:0017124">
    <property type="term" value="F:SH3 domain binding"/>
    <property type="evidence" value="ECO:0007669"/>
    <property type="project" value="UniProtKB-KW"/>
</dbReference>
<dbReference type="GO" id="GO:0007015">
    <property type="term" value="P:actin filament organization"/>
    <property type="evidence" value="ECO:0000318"/>
    <property type="project" value="GO_Central"/>
</dbReference>
<dbReference type="GO" id="GO:0006915">
    <property type="term" value="P:apoptotic process"/>
    <property type="evidence" value="ECO:0007669"/>
    <property type="project" value="UniProtKB-KW"/>
</dbReference>
<dbReference type="GO" id="GO:0048870">
    <property type="term" value="P:cell motility"/>
    <property type="evidence" value="ECO:0000318"/>
    <property type="project" value="GO_Central"/>
</dbReference>
<dbReference type="GO" id="GO:0006909">
    <property type="term" value="P:phagocytosis"/>
    <property type="evidence" value="ECO:0007669"/>
    <property type="project" value="UniProtKB-KW"/>
</dbReference>
<dbReference type="Gene3D" id="6.10.250.810">
    <property type="match status" value="1"/>
</dbReference>
<dbReference type="Gene3D" id="1.25.10.10">
    <property type="entry name" value="Leucine-rich Repeat Variant"/>
    <property type="match status" value="1"/>
</dbReference>
<dbReference type="Gene3D" id="2.30.29.30">
    <property type="entry name" value="Pleckstrin-homology domain (PH domain)/Phosphotyrosine-binding domain (PTB)"/>
    <property type="match status" value="1"/>
</dbReference>
<dbReference type="InterPro" id="IPR011989">
    <property type="entry name" value="ARM-like"/>
</dbReference>
<dbReference type="InterPro" id="IPR016024">
    <property type="entry name" value="ARM-type_fold"/>
</dbReference>
<dbReference type="InterPro" id="IPR024574">
    <property type="entry name" value="ELMO_ARM"/>
</dbReference>
<dbReference type="InterPro" id="IPR006816">
    <property type="entry name" value="ELMO_dom"/>
</dbReference>
<dbReference type="InterPro" id="IPR050868">
    <property type="entry name" value="ELMO_domain-containing"/>
</dbReference>
<dbReference type="InterPro" id="IPR011993">
    <property type="entry name" value="PH-like_dom_sf"/>
</dbReference>
<dbReference type="InterPro" id="IPR001849">
    <property type="entry name" value="PH_domain"/>
</dbReference>
<dbReference type="PANTHER" id="PTHR12771">
    <property type="entry name" value="ENGULFMENT AND CELL MOTILITY"/>
    <property type="match status" value="1"/>
</dbReference>
<dbReference type="PANTHER" id="PTHR12771:SF16">
    <property type="entry name" value="ENGULFMENT AND CELL MOTILITY PROTEIN 3"/>
    <property type="match status" value="1"/>
</dbReference>
<dbReference type="Pfam" id="PF11841">
    <property type="entry name" value="ELMO_ARM"/>
    <property type="match status" value="1"/>
</dbReference>
<dbReference type="Pfam" id="PF04727">
    <property type="entry name" value="ELMO_CED12"/>
    <property type="match status" value="1"/>
</dbReference>
<dbReference type="Pfam" id="PF16457">
    <property type="entry name" value="PH_12"/>
    <property type="match status" value="1"/>
</dbReference>
<dbReference type="SUPFAM" id="SSF48371">
    <property type="entry name" value="ARM repeat"/>
    <property type="match status" value="1"/>
</dbReference>
<dbReference type="SUPFAM" id="SSF50729">
    <property type="entry name" value="PH domain-like"/>
    <property type="match status" value="1"/>
</dbReference>
<dbReference type="PROSITE" id="PS51335">
    <property type="entry name" value="ELMO"/>
    <property type="match status" value="1"/>
</dbReference>
<name>ELMO3_BOVIN</name>
<accession>A6QR40</accession>
<comment type="function">
    <text evidence="1">Involved in cytoskeletal rearrangements required for phagocytosis of apoptotic cells and cell motility. Acts in association with DOCK1 and CRK. Was initially proposed to be required in complex with DOCK1 to activate Rac Rho small GTPases. May enhance the guanine nucleotide exchange factor (GEF) activity of DOCK1 (By similarity).</text>
</comment>
<comment type="subunit">
    <text evidence="1 2">Probably interacts directly with the SH3-domain of DOCK1 via its SH3-binding site. Part of a complex with DOCK1 and RAC1 (By similarity). Interacts with ADGRB3 (By similarity).</text>
</comment>
<comment type="subcellular location">
    <subcellularLocation>
        <location evidence="1">Cytoplasm</location>
    </subcellularLocation>
</comment>
<reference key="1">
    <citation type="submission" date="2007-07" db="EMBL/GenBank/DDBJ databases">
        <authorList>
            <consortium name="NIH - Mammalian Gene Collection (MGC) project"/>
        </authorList>
    </citation>
    <scope>NUCLEOTIDE SEQUENCE [LARGE SCALE MRNA]</scope>
    <source>
        <strain>Hereford</strain>
        <tissue>Ascending colon</tissue>
    </source>
</reference>
<evidence type="ECO:0000250" key="1"/>
<evidence type="ECO:0000250" key="2">
    <source>
        <dbReference type="UniProtKB" id="Q96BJ8"/>
    </source>
</evidence>
<evidence type="ECO:0000255" key="3">
    <source>
        <dbReference type="PROSITE-ProRule" id="PRU00664"/>
    </source>
</evidence>